<keyword id="KW-0653">Protein transport</keyword>
<keyword id="KW-1185">Reference proteome</keyword>
<keyword id="KW-0811">Translocation</keyword>
<keyword id="KW-0813">Transport</keyword>
<sequence length="319" mass="36927">MLKNKTFKVTWNYISQTTFMYGSKVSFSNGEVTFINPLMPSGLPIHEWLMLKQFSKYKSAPSLPILRRGQHYKLHFDFDATPAGSVYFIIIFYNKNGTKLSTEIVKSNSITIQYPDEAYAYKIKMMNAASTSLIFRCLTITEMTHQYDLEYKSMRVTKIGDDQYGNDMINVIIAEPSDTYPTISNDFLKLFGHVWLVERWMDDNIEGNIKQLKNDLQSQDTLKAINLISYGSKSNVFATYVAQHLGCKVYRTSHEDDDLKGWLTEHVPGNHELKDTNVEVYFKEEQDKHLNYMSRLMNPVRFLDYLDVSKLNGGEVNET</sequence>
<evidence type="ECO:0000269" key="1">
    <source>
    </source>
</evidence>
<evidence type="ECO:0000305" key="2"/>
<comment type="function">
    <text evidence="1">Part of the accessory SecA2/SecY2 system specifically required to export SraP, a serine-rich repeat cell wall protein encoded upstream in the same operon.</text>
</comment>
<comment type="subunit">
    <text>Part of the accessory SecA2/SecY2 protein translocation apparatus required to export cell wall protein SraP.</text>
</comment>
<comment type="disruption phenotype">
    <text evidence="1">No effect on cell growth, significantly reduces export of the cell wall protein SraP. The small amount that is exported seems to be glycosylated normally.</text>
</comment>
<comment type="similarity">
    <text evidence="2">Belongs to the accessory Sec system protein Asp3 family.</text>
</comment>
<proteinExistence type="inferred from homology"/>
<accession>Q2FUW5</accession>
<dbReference type="EMBL" id="CP000253">
    <property type="protein sequence ID" value="ABD31973.1"/>
    <property type="molecule type" value="Genomic_DNA"/>
</dbReference>
<dbReference type="RefSeq" id="WP_000916742.1">
    <property type="nucleotide sequence ID" value="NZ_LS483365.1"/>
</dbReference>
<dbReference type="RefSeq" id="YP_501435.1">
    <property type="nucleotide sequence ID" value="NC_007795.1"/>
</dbReference>
<dbReference type="SMR" id="Q2FUW5"/>
<dbReference type="STRING" id="93061.SAOUHSC_02986"/>
<dbReference type="PaxDb" id="1280-SAXN108_2921"/>
<dbReference type="GeneID" id="3921468"/>
<dbReference type="KEGG" id="sao:SAOUHSC_02986"/>
<dbReference type="PATRIC" id="fig|93061.5.peg.2693"/>
<dbReference type="eggNOG" id="ENOG50315V3">
    <property type="taxonomic scope" value="Bacteria"/>
</dbReference>
<dbReference type="HOGENOM" id="CLU_075563_0_0_9"/>
<dbReference type="OrthoDB" id="2042927at2"/>
<dbReference type="PRO" id="PR:Q2FUW5"/>
<dbReference type="Proteomes" id="UP000008816">
    <property type="component" value="Chromosome"/>
</dbReference>
<dbReference type="GO" id="GO:0015031">
    <property type="term" value="P:protein transport"/>
    <property type="evidence" value="ECO:0007669"/>
    <property type="project" value="UniProtKB-KW"/>
</dbReference>
<dbReference type="InterPro" id="IPR022259">
    <property type="entry name" value="Acessory_Sec_prot_Asp3"/>
</dbReference>
<dbReference type="NCBIfam" id="TIGR03711">
    <property type="entry name" value="acc_sec_asp3"/>
    <property type="match status" value="1"/>
</dbReference>
<dbReference type="Pfam" id="PF15432">
    <property type="entry name" value="Sec-ASP3"/>
    <property type="match status" value="1"/>
</dbReference>
<feature type="chain" id="PRO_0000414199" description="Accessory Sec system protein Asp3">
    <location>
        <begin position="1"/>
        <end position="319"/>
    </location>
</feature>
<gene>
    <name type="primary">asp3</name>
    <name type="ordered locus">SAOUHSC_02986</name>
</gene>
<protein>
    <recommendedName>
        <fullName>Accessory Sec system protein Asp3</fullName>
    </recommendedName>
    <alternativeName>
        <fullName>Accessory secretory protein Asp3</fullName>
    </alternativeName>
</protein>
<reference key="1">
    <citation type="book" date="2006" name="Gram positive pathogens, 2nd edition">
        <title>The Staphylococcus aureus NCTC 8325 genome.</title>
        <editorList>
            <person name="Fischetti V."/>
            <person name="Novick R."/>
            <person name="Ferretti J."/>
            <person name="Portnoy D."/>
            <person name="Rood J."/>
        </editorList>
        <authorList>
            <person name="Gillaspy A.F."/>
            <person name="Worrell V."/>
            <person name="Orvis J."/>
            <person name="Roe B.A."/>
            <person name="Dyer D.W."/>
            <person name="Iandolo J.J."/>
        </authorList>
    </citation>
    <scope>NUCLEOTIDE SEQUENCE [LARGE SCALE GENOMIC DNA]</scope>
    <source>
        <strain>NCTC 8325 / PS 47</strain>
    </source>
</reference>
<reference key="2">
    <citation type="journal article" date="2008" name="J. Bacteriol.">
        <title>Characterization of the accessory Sec system of Staphylococcus aureus.</title>
        <authorList>
            <person name="Siboo I.R."/>
            <person name="Chaffin D.O."/>
            <person name="Rubens C.E."/>
            <person name="Sullam P.M."/>
        </authorList>
    </citation>
    <scope>FUNCTION</scope>
    <scope>DISRUPTION PHENOTYPE</scope>
    <source>
        <strain>ISP479C</strain>
    </source>
</reference>
<name>ASP3_STAA8</name>
<organism>
    <name type="scientific">Staphylococcus aureus (strain NCTC 8325 / PS 47)</name>
    <dbReference type="NCBI Taxonomy" id="93061"/>
    <lineage>
        <taxon>Bacteria</taxon>
        <taxon>Bacillati</taxon>
        <taxon>Bacillota</taxon>
        <taxon>Bacilli</taxon>
        <taxon>Bacillales</taxon>
        <taxon>Staphylococcaceae</taxon>
        <taxon>Staphylococcus</taxon>
    </lineage>
</organism>